<protein>
    <recommendedName>
        <fullName>CBL-interacting serine/threonine-protein kinase 12</fullName>
        <ecNumber>2.7.11.1</ecNumber>
    </recommendedName>
    <alternativeName>
        <fullName>SNF1-related kinase 3.9</fullName>
    </alternativeName>
    <alternativeName>
        <fullName>SOS2-like protein kinase PKS8</fullName>
    </alternativeName>
</protein>
<reference key="1">
    <citation type="journal article" date="2001" name="EMBO J.">
        <title>The NAF domain defines a novel protein-protein interaction module conserved in Ca(2+)-regulated kinases.</title>
        <authorList>
            <person name="Albrecht V."/>
            <person name="Ritz O."/>
            <person name="Linder S."/>
            <person name="Harter K."/>
            <person name="Kudla J."/>
        </authorList>
    </citation>
    <scope>NUCLEOTIDE SEQUENCE [MRNA]</scope>
    <scope>INTERACTION WITH CBL2 AND CBL3</scope>
</reference>
<reference key="2">
    <citation type="journal article" date="2001" name="Plant Cell">
        <title>Molecular characterization of functional domains in the protein kinase SOS2 that is required for plant salt tolerance.</title>
        <authorList>
            <person name="Guo Y."/>
            <person name="Halfter U."/>
            <person name="Ishitani M."/>
            <person name="Zhu J.-K."/>
        </authorList>
    </citation>
    <scope>NUCLEOTIDE SEQUENCE [MRNA]</scope>
    <scope>TISSUE SPECIFICITY</scope>
    <scope>INDUCTION</scope>
    <source>
        <strain>cv. Columbia</strain>
    </source>
</reference>
<reference key="3">
    <citation type="journal article" date="1999" name="Nature">
        <title>Sequence and analysis of chromosome 4 of the plant Arabidopsis thaliana.</title>
        <authorList>
            <person name="Mayer K.F.X."/>
            <person name="Schueller C."/>
            <person name="Wambutt R."/>
            <person name="Murphy G."/>
            <person name="Volckaert G."/>
            <person name="Pohl T."/>
            <person name="Duesterhoeft A."/>
            <person name="Stiekema W."/>
            <person name="Entian K.-D."/>
            <person name="Terryn N."/>
            <person name="Harris B."/>
            <person name="Ansorge W."/>
            <person name="Brandt P."/>
            <person name="Grivell L.A."/>
            <person name="Rieger M."/>
            <person name="Weichselgartner M."/>
            <person name="de Simone V."/>
            <person name="Obermaier B."/>
            <person name="Mache R."/>
            <person name="Mueller M."/>
            <person name="Kreis M."/>
            <person name="Delseny M."/>
            <person name="Puigdomenech P."/>
            <person name="Watson M."/>
            <person name="Schmidtheini T."/>
            <person name="Reichert B."/>
            <person name="Portetelle D."/>
            <person name="Perez-Alonso M."/>
            <person name="Boutry M."/>
            <person name="Bancroft I."/>
            <person name="Vos P."/>
            <person name="Hoheisel J."/>
            <person name="Zimmermann W."/>
            <person name="Wedler H."/>
            <person name="Ridley P."/>
            <person name="Langham S.-A."/>
            <person name="McCullagh B."/>
            <person name="Bilham L."/>
            <person name="Robben J."/>
            <person name="van der Schueren J."/>
            <person name="Grymonprez B."/>
            <person name="Chuang Y.-J."/>
            <person name="Vandenbussche F."/>
            <person name="Braeken M."/>
            <person name="Weltjens I."/>
            <person name="Voet M."/>
            <person name="Bastiaens I."/>
            <person name="Aert R."/>
            <person name="Defoor E."/>
            <person name="Weitzenegger T."/>
            <person name="Bothe G."/>
            <person name="Ramsperger U."/>
            <person name="Hilbert H."/>
            <person name="Braun M."/>
            <person name="Holzer E."/>
            <person name="Brandt A."/>
            <person name="Peters S."/>
            <person name="van Staveren M."/>
            <person name="Dirkse W."/>
            <person name="Mooijman P."/>
            <person name="Klein Lankhorst R."/>
            <person name="Rose M."/>
            <person name="Hauf J."/>
            <person name="Koetter P."/>
            <person name="Berneiser S."/>
            <person name="Hempel S."/>
            <person name="Feldpausch M."/>
            <person name="Lamberth S."/>
            <person name="Van den Daele H."/>
            <person name="De Keyser A."/>
            <person name="Buysshaert C."/>
            <person name="Gielen J."/>
            <person name="Villarroel R."/>
            <person name="De Clercq R."/>
            <person name="van Montagu M."/>
            <person name="Rogers J."/>
            <person name="Cronin A."/>
            <person name="Quail M.A."/>
            <person name="Bray-Allen S."/>
            <person name="Clark L."/>
            <person name="Doggett J."/>
            <person name="Hall S."/>
            <person name="Kay M."/>
            <person name="Lennard N."/>
            <person name="McLay K."/>
            <person name="Mayes R."/>
            <person name="Pettett A."/>
            <person name="Rajandream M.A."/>
            <person name="Lyne M."/>
            <person name="Benes V."/>
            <person name="Rechmann S."/>
            <person name="Borkova D."/>
            <person name="Bloecker H."/>
            <person name="Scharfe M."/>
            <person name="Grimm M."/>
            <person name="Loehnert T.-H."/>
            <person name="Dose S."/>
            <person name="de Haan M."/>
            <person name="Maarse A.C."/>
            <person name="Schaefer M."/>
            <person name="Mueller-Auer S."/>
            <person name="Gabel C."/>
            <person name="Fuchs M."/>
            <person name="Fartmann B."/>
            <person name="Granderath K."/>
            <person name="Dauner D."/>
            <person name="Herzl A."/>
            <person name="Neumann S."/>
            <person name="Argiriou A."/>
            <person name="Vitale D."/>
            <person name="Liguori R."/>
            <person name="Piravandi E."/>
            <person name="Massenet O."/>
            <person name="Quigley F."/>
            <person name="Clabauld G."/>
            <person name="Muendlein A."/>
            <person name="Felber R."/>
            <person name="Schnabl S."/>
            <person name="Hiller R."/>
            <person name="Schmidt W."/>
            <person name="Lecharny A."/>
            <person name="Aubourg S."/>
            <person name="Chefdor F."/>
            <person name="Cooke R."/>
            <person name="Berger C."/>
            <person name="Monfort A."/>
            <person name="Casacuberta E."/>
            <person name="Gibbons T."/>
            <person name="Weber N."/>
            <person name="Vandenbol M."/>
            <person name="Bargues M."/>
            <person name="Terol J."/>
            <person name="Torres A."/>
            <person name="Perez-Perez A."/>
            <person name="Purnelle B."/>
            <person name="Bent E."/>
            <person name="Johnson S."/>
            <person name="Tacon D."/>
            <person name="Jesse T."/>
            <person name="Heijnen L."/>
            <person name="Schwarz S."/>
            <person name="Scholler P."/>
            <person name="Heber S."/>
            <person name="Francs P."/>
            <person name="Bielke C."/>
            <person name="Frishman D."/>
            <person name="Haase D."/>
            <person name="Lemcke K."/>
            <person name="Mewes H.-W."/>
            <person name="Stocker S."/>
            <person name="Zaccaria P."/>
            <person name="Bevan M."/>
            <person name="Wilson R.K."/>
            <person name="de la Bastide M."/>
            <person name="Habermann K."/>
            <person name="Parnell L."/>
            <person name="Dedhia N."/>
            <person name="Gnoj L."/>
            <person name="Schutz K."/>
            <person name="Huang E."/>
            <person name="Spiegel L."/>
            <person name="Sekhon M."/>
            <person name="Murray J."/>
            <person name="Sheet P."/>
            <person name="Cordes M."/>
            <person name="Abu-Threideh J."/>
            <person name="Stoneking T."/>
            <person name="Kalicki J."/>
            <person name="Graves T."/>
            <person name="Harmon G."/>
            <person name="Edwards J."/>
            <person name="Latreille P."/>
            <person name="Courtney L."/>
            <person name="Cloud J."/>
            <person name="Abbott A."/>
            <person name="Scott K."/>
            <person name="Johnson D."/>
            <person name="Minx P."/>
            <person name="Bentley D."/>
            <person name="Fulton B."/>
            <person name="Miller N."/>
            <person name="Greco T."/>
            <person name="Kemp K."/>
            <person name="Kramer J."/>
            <person name="Fulton L."/>
            <person name="Mardis E."/>
            <person name="Dante M."/>
            <person name="Pepin K."/>
            <person name="Hillier L.W."/>
            <person name="Nelson J."/>
            <person name="Spieth J."/>
            <person name="Ryan E."/>
            <person name="Andrews S."/>
            <person name="Geisel C."/>
            <person name="Layman D."/>
            <person name="Du H."/>
            <person name="Ali J."/>
            <person name="Berghoff A."/>
            <person name="Jones K."/>
            <person name="Drone K."/>
            <person name="Cotton M."/>
            <person name="Joshu C."/>
            <person name="Antonoiu B."/>
            <person name="Zidanic M."/>
            <person name="Strong C."/>
            <person name="Sun H."/>
            <person name="Lamar B."/>
            <person name="Yordan C."/>
            <person name="Ma P."/>
            <person name="Zhong J."/>
            <person name="Preston R."/>
            <person name="Vil D."/>
            <person name="Shekher M."/>
            <person name="Matero A."/>
            <person name="Shah R."/>
            <person name="Swaby I.K."/>
            <person name="O'Shaughnessy A."/>
            <person name="Rodriguez M."/>
            <person name="Hoffman J."/>
            <person name="Till S."/>
            <person name="Granat S."/>
            <person name="Shohdy N."/>
            <person name="Hasegawa A."/>
            <person name="Hameed A."/>
            <person name="Lodhi M."/>
            <person name="Johnson A."/>
            <person name="Chen E."/>
            <person name="Marra M.A."/>
            <person name="Martienssen R."/>
            <person name="McCombie W.R."/>
        </authorList>
    </citation>
    <scope>NUCLEOTIDE SEQUENCE [LARGE SCALE GENOMIC DNA]</scope>
    <source>
        <strain>cv. Columbia</strain>
    </source>
</reference>
<reference key="4">
    <citation type="journal article" date="2017" name="Plant J.">
        <title>Araport11: a complete reannotation of the Arabidopsis thaliana reference genome.</title>
        <authorList>
            <person name="Cheng C.Y."/>
            <person name="Krishnakumar V."/>
            <person name="Chan A.P."/>
            <person name="Thibaud-Nissen F."/>
            <person name="Schobel S."/>
            <person name="Town C.D."/>
        </authorList>
    </citation>
    <scope>GENOME REANNOTATION</scope>
    <source>
        <strain>cv. Columbia</strain>
    </source>
</reference>
<reference key="5">
    <citation type="journal article" date="2003" name="Science">
        <title>Empirical analysis of transcriptional activity in the Arabidopsis genome.</title>
        <authorList>
            <person name="Yamada K."/>
            <person name="Lim J."/>
            <person name="Dale J.M."/>
            <person name="Chen H."/>
            <person name="Shinn P."/>
            <person name="Palm C.J."/>
            <person name="Southwick A.M."/>
            <person name="Wu H.C."/>
            <person name="Kim C.J."/>
            <person name="Nguyen M."/>
            <person name="Pham P.K."/>
            <person name="Cheuk R.F."/>
            <person name="Karlin-Newmann G."/>
            <person name="Liu S.X."/>
            <person name="Lam B."/>
            <person name="Sakano H."/>
            <person name="Wu T."/>
            <person name="Yu G."/>
            <person name="Miranda M."/>
            <person name="Quach H.L."/>
            <person name="Tripp M."/>
            <person name="Chang C.H."/>
            <person name="Lee J.M."/>
            <person name="Toriumi M.J."/>
            <person name="Chan M.M."/>
            <person name="Tang C.C."/>
            <person name="Onodera C.S."/>
            <person name="Deng J.M."/>
            <person name="Akiyama K."/>
            <person name="Ansari Y."/>
            <person name="Arakawa T."/>
            <person name="Banh J."/>
            <person name="Banno F."/>
            <person name="Bowser L."/>
            <person name="Brooks S.Y."/>
            <person name="Carninci P."/>
            <person name="Chao Q."/>
            <person name="Choy N."/>
            <person name="Enju A."/>
            <person name="Goldsmith A.D."/>
            <person name="Gurjal M."/>
            <person name="Hansen N.F."/>
            <person name="Hayashizaki Y."/>
            <person name="Johnson-Hopson C."/>
            <person name="Hsuan V.W."/>
            <person name="Iida K."/>
            <person name="Karnes M."/>
            <person name="Khan S."/>
            <person name="Koesema E."/>
            <person name="Ishida J."/>
            <person name="Jiang P.X."/>
            <person name="Jones T."/>
            <person name="Kawai J."/>
            <person name="Kamiya A."/>
            <person name="Meyers C."/>
            <person name="Nakajima M."/>
            <person name="Narusaka M."/>
            <person name="Seki M."/>
            <person name="Sakurai T."/>
            <person name="Satou M."/>
            <person name="Tamse R."/>
            <person name="Vaysberg M."/>
            <person name="Wallender E.K."/>
            <person name="Wong C."/>
            <person name="Yamamura Y."/>
            <person name="Yuan S."/>
            <person name="Shinozaki K."/>
            <person name="Davis R.W."/>
            <person name="Theologis A."/>
            <person name="Ecker J.R."/>
        </authorList>
    </citation>
    <scope>NUCLEOTIDE SEQUENCE [LARGE SCALE MRNA]</scope>
    <source>
        <strain>cv. Columbia</strain>
    </source>
</reference>
<reference key="6">
    <citation type="journal article" date="2003" name="Plant Physiol.">
        <title>The Arabidopsis CDPK-SnRK superfamily of protein kinases.</title>
        <authorList>
            <person name="Hrabak E.M."/>
            <person name="Chan C.W.M."/>
            <person name="Gribskov M."/>
            <person name="Harper J.F."/>
            <person name="Choi J.H."/>
            <person name="Halford N."/>
            <person name="Kudla J."/>
            <person name="Luan S."/>
            <person name="Nimmo H.G."/>
            <person name="Sussman M.R."/>
            <person name="Thomas M."/>
            <person name="Walker-Simmons K."/>
            <person name="Zhu J.-K."/>
            <person name="Harmon A.C."/>
        </authorList>
    </citation>
    <scope>GENE FAMILY</scope>
    <scope>NOMENCLATURE</scope>
</reference>
<comment type="function">
    <text evidence="1">CIPK serine-threonine protein kinases interact with CBL proteins. Binding of a CBL protein to the regulatory NAF domain of CIPK protein lead to the activation of the kinase in a calcium-dependent manner (By similarity).</text>
</comment>
<comment type="catalytic activity">
    <reaction>
        <text>L-seryl-[protein] + ATP = O-phospho-L-seryl-[protein] + ADP + H(+)</text>
        <dbReference type="Rhea" id="RHEA:17989"/>
        <dbReference type="Rhea" id="RHEA-COMP:9863"/>
        <dbReference type="Rhea" id="RHEA-COMP:11604"/>
        <dbReference type="ChEBI" id="CHEBI:15378"/>
        <dbReference type="ChEBI" id="CHEBI:29999"/>
        <dbReference type="ChEBI" id="CHEBI:30616"/>
        <dbReference type="ChEBI" id="CHEBI:83421"/>
        <dbReference type="ChEBI" id="CHEBI:456216"/>
        <dbReference type="EC" id="2.7.11.1"/>
    </reaction>
</comment>
<comment type="catalytic activity">
    <reaction>
        <text>L-threonyl-[protein] + ATP = O-phospho-L-threonyl-[protein] + ADP + H(+)</text>
        <dbReference type="Rhea" id="RHEA:46608"/>
        <dbReference type="Rhea" id="RHEA-COMP:11060"/>
        <dbReference type="Rhea" id="RHEA-COMP:11605"/>
        <dbReference type="ChEBI" id="CHEBI:15378"/>
        <dbReference type="ChEBI" id="CHEBI:30013"/>
        <dbReference type="ChEBI" id="CHEBI:30616"/>
        <dbReference type="ChEBI" id="CHEBI:61977"/>
        <dbReference type="ChEBI" id="CHEBI:456216"/>
        <dbReference type="EC" id="2.7.11.1"/>
    </reaction>
</comment>
<comment type="cofactor">
    <cofactor evidence="1">
        <name>Mn(2+)</name>
        <dbReference type="ChEBI" id="CHEBI:29035"/>
    </cofactor>
</comment>
<comment type="subunit">
    <text evidence="7">Interacts with CBL2 and CBL3.</text>
</comment>
<comment type="interaction">
    <interactant intactId="EBI-637523">
        <id>Q9SN43</id>
    </interactant>
    <interactant intactId="EBI-485991">
        <id>Q8LAS7</id>
        <label>CBL2</label>
    </interactant>
    <organismsDiffer>false</organismsDiffer>
    <experiments>4</experiments>
</comment>
<comment type="interaction">
    <interactant intactId="EBI-637523">
        <id>Q9SN43</id>
    </interactant>
    <interactant intactId="EBI-25506855">
        <id>O23160</id>
        <label>MYB73</label>
    </interactant>
    <organismsDiffer>false</organismsDiffer>
    <experiments>3</experiments>
</comment>
<comment type="tissue specificity">
    <text evidence="8">Expressed in roots and shoots.</text>
</comment>
<comment type="induction">
    <text evidence="8">Repressed in roots by salt stress.</text>
</comment>
<comment type="domain">
    <text evidence="1">The activation loop within the kinase domain is the target of phosphorylation/activation by upstream protein kinases. The PPI motif mediates the interaction with the ABI (abscisic acid-insensitive) phosphatases (By similarity).</text>
</comment>
<comment type="similarity">
    <text evidence="9">Belongs to the protein kinase superfamily. CAMK Ser/Thr protein kinase family. SNF1 subfamily.</text>
</comment>
<proteinExistence type="evidence at protein level"/>
<feature type="chain" id="PRO_0000337214" description="CBL-interacting serine/threonine-protein kinase 12">
    <location>
        <begin position="1"/>
        <end position="489"/>
    </location>
</feature>
<feature type="domain" description="Protein kinase" evidence="4">
    <location>
        <begin position="26"/>
        <end position="280"/>
    </location>
</feature>
<feature type="domain" description="NAF" evidence="5">
    <location>
        <begin position="336"/>
        <end position="360"/>
    </location>
</feature>
<feature type="region of interest" description="Activation loop" evidence="1">
    <location>
        <begin position="166"/>
        <end position="195"/>
    </location>
</feature>
<feature type="region of interest" description="PPI" evidence="1">
    <location>
        <begin position="363"/>
        <end position="392"/>
    </location>
</feature>
<feature type="active site" description="Proton acceptor" evidence="4 6">
    <location>
        <position position="148"/>
    </location>
</feature>
<feature type="binding site" evidence="4">
    <location>
        <begin position="32"/>
        <end position="40"/>
    </location>
    <ligand>
        <name>ATP</name>
        <dbReference type="ChEBI" id="CHEBI:30616"/>
    </ligand>
</feature>
<feature type="binding site" evidence="4">
    <location>
        <position position="55"/>
    </location>
    <ligand>
        <name>ATP</name>
        <dbReference type="ChEBI" id="CHEBI:30616"/>
    </ligand>
</feature>
<feature type="modified residue" description="Phosphoserine" evidence="3">
    <location>
        <position position="170"/>
    </location>
</feature>
<feature type="modified residue" description="Phosphothreonine" evidence="2">
    <location>
        <position position="184"/>
    </location>
</feature>
<name>CIPKC_ARATH</name>
<dbReference type="EC" id="2.7.11.1"/>
<dbReference type="EMBL" id="AF295667">
    <property type="protein sequence ID" value="AAK16687.1"/>
    <property type="molecule type" value="mRNA"/>
</dbReference>
<dbReference type="EMBL" id="AF339149">
    <property type="protein sequence ID" value="AAK26847.1"/>
    <property type="molecule type" value="mRNA"/>
</dbReference>
<dbReference type="EMBL" id="AL035526">
    <property type="protein sequence ID" value="CAB37455.1"/>
    <property type="molecule type" value="Genomic_DNA"/>
</dbReference>
<dbReference type="EMBL" id="AL161549">
    <property type="protein sequence ID" value="CAB78872.1"/>
    <property type="molecule type" value="Genomic_DNA"/>
</dbReference>
<dbReference type="EMBL" id="CP002687">
    <property type="protein sequence ID" value="AEE84078.1"/>
    <property type="molecule type" value="Genomic_DNA"/>
</dbReference>
<dbReference type="EMBL" id="AY059819">
    <property type="protein sequence ID" value="AAL24301.1"/>
    <property type="molecule type" value="mRNA"/>
</dbReference>
<dbReference type="EMBL" id="BT001170">
    <property type="protein sequence ID" value="AAN65057.1"/>
    <property type="molecule type" value="mRNA"/>
</dbReference>
<dbReference type="PIR" id="T04862">
    <property type="entry name" value="T04862"/>
</dbReference>
<dbReference type="RefSeq" id="NP_193605.1">
    <property type="nucleotide sequence ID" value="NM_117986.3"/>
</dbReference>
<dbReference type="SMR" id="Q9SN43"/>
<dbReference type="BioGRID" id="12897">
    <property type="interactions" value="10"/>
</dbReference>
<dbReference type="FunCoup" id="Q9SN43">
    <property type="interactions" value="1304"/>
</dbReference>
<dbReference type="IntAct" id="Q9SN43">
    <property type="interactions" value="10"/>
</dbReference>
<dbReference type="STRING" id="3702.Q9SN43"/>
<dbReference type="iPTMnet" id="Q9SN43"/>
<dbReference type="PaxDb" id="3702-AT4G18700.1"/>
<dbReference type="ProteomicsDB" id="246859"/>
<dbReference type="DNASU" id="827604"/>
<dbReference type="EnsemblPlants" id="AT4G18700.1">
    <property type="protein sequence ID" value="AT4G18700.1"/>
    <property type="gene ID" value="AT4G18700"/>
</dbReference>
<dbReference type="GeneID" id="827604"/>
<dbReference type="Gramene" id="AT4G18700.1">
    <property type="protein sequence ID" value="AT4G18700.1"/>
    <property type="gene ID" value="AT4G18700"/>
</dbReference>
<dbReference type="KEGG" id="ath:AT4G18700"/>
<dbReference type="Araport" id="AT4G18700"/>
<dbReference type="TAIR" id="AT4G18700">
    <property type="gene designation" value="CIPK12"/>
</dbReference>
<dbReference type="eggNOG" id="KOG0583">
    <property type="taxonomic scope" value="Eukaryota"/>
</dbReference>
<dbReference type="HOGENOM" id="CLU_000288_59_0_1"/>
<dbReference type="InParanoid" id="Q9SN43"/>
<dbReference type="OMA" id="FTFPEIM"/>
<dbReference type="OrthoDB" id="193931at2759"/>
<dbReference type="PhylomeDB" id="Q9SN43"/>
<dbReference type="PRO" id="PR:Q9SN43"/>
<dbReference type="Proteomes" id="UP000006548">
    <property type="component" value="Chromosome 4"/>
</dbReference>
<dbReference type="ExpressionAtlas" id="Q9SN43">
    <property type="expression patterns" value="baseline and differential"/>
</dbReference>
<dbReference type="GO" id="GO:0005524">
    <property type="term" value="F:ATP binding"/>
    <property type="evidence" value="ECO:0007669"/>
    <property type="project" value="UniProtKB-KW"/>
</dbReference>
<dbReference type="GO" id="GO:0106310">
    <property type="term" value="F:protein serine kinase activity"/>
    <property type="evidence" value="ECO:0007669"/>
    <property type="project" value="RHEA"/>
</dbReference>
<dbReference type="GO" id="GO:0004674">
    <property type="term" value="F:protein serine/threonine kinase activity"/>
    <property type="evidence" value="ECO:0007669"/>
    <property type="project" value="UniProtKB-KW"/>
</dbReference>
<dbReference type="GO" id="GO:0007165">
    <property type="term" value="P:signal transduction"/>
    <property type="evidence" value="ECO:0007669"/>
    <property type="project" value="InterPro"/>
</dbReference>
<dbReference type="CDD" id="cd12195">
    <property type="entry name" value="CIPK_C"/>
    <property type="match status" value="1"/>
</dbReference>
<dbReference type="CDD" id="cd14663">
    <property type="entry name" value="STKc_SnRK3"/>
    <property type="match status" value="1"/>
</dbReference>
<dbReference type="FunFam" id="1.10.510.10:FF:000653">
    <property type="entry name" value="Non-specific serine/threonine protein kinase"/>
    <property type="match status" value="1"/>
</dbReference>
<dbReference type="FunFam" id="3.30.200.20:FF:000096">
    <property type="entry name" value="Non-specific serine/threonine protein kinase"/>
    <property type="match status" value="1"/>
</dbReference>
<dbReference type="FunFam" id="3.30.310.80:FF:000015">
    <property type="entry name" value="Non-specific serine/threonine protein kinase"/>
    <property type="match status" value="1"/>
</dbReference>
<dbReference type="Gene3D" id="3.30.310.80">
    <property type="entry name" value="Kinase associated domain 1, KA1"/>
    <property type="match status" value="1"/>
</dbReference>
<dbReference type="Gene3D" id="1.10.510.10">
    <property type="entry name" value="Transferase(Phosphotransferase) domain 1"/>
    <property type="match status" value="1"/>
</dbReference>
<dbReference type="InterPro" id="IPR011009">
    <property type="entry name" value="Kinase-like_dom_sf"/>
</dbReference>
<dbReference type="InterPro" id="IPR018451">
    <property type="entry name" value="NAF/FISL_domain"/>
</dbReference>
<dbReference type="InterPro" id="IPR004041">
    <property type="entry name" value="NAF_dom"/>
</dbReference>
<dbReference type="InterPro" id="IPR000719">
    <property type="entry name" value="Prot_kinase_dom"/>
</dbReference>
<dbReference type="InterPro" id="IPR017441">
    <property type="entry name" value="Protein_kinase_ATP_BS"/>
</dbReference>
<dbReference type="InterPro" id="IPR008271">
    <property type="entry name" value="Ser/Thr_kinase_AS"/>
</dbReference>
<dbReference type="PANTHER" id="PTHR43895">
    <property type="entry name" value="CALCIUM/CALMODULIN-DEPENDENT PROTEIN KINASE KINASE-RELATED"/>
    <property type="match status" value="1"/>
</dbReference>
<dbReference type="PANTHER" id="PTHR43895:SF140">
    <property type="entry name" value="CBL-INTERACTING SERINE_THREONINE-PROTEIN KINASE 12"/>
    <property type="match status" value="1"/>
</dbReference>
<dbReference type="Pfam" id="PF03822">
    <property type="entry name" value="NAF"/>
    <property type="match status" value="1"/>
</dbReference>
<dbReference type="Pfam" id="PF00069">
    <property type="entry name" value="Pkinase"/>
    <property type="match status" value="1"/>
</dbReference>
<dbReference type="SMART" id="SM00220">
    <property type="entry name" value="S_TKc"/>
    <property type="match status" value="1"/>
</dbReference>
<dbReference type="SUPFAM" id="SSF56112">
    <property type="entry name" value="Protein kinase-like (PK-like)"/>
    <property type="match status" value="1"/>
</dbReference>
<dbReference type="PROSITE" id="PS50816">
    <property type="entry name" value="NAF"/>
    <property type="match status" value="1"/>
</dbReference>
<dbReference type="PROSITE" id="PS00107">
    <property type="entry name" value="PROTEIN_KINASE_ATP"/>
    <property type="match status" value="1"/>
</dbReference>
<dbReference type="PROSITE" id="PS50011">
    <property type="entry name" value="PROTEIN_KINASE_DOM"/>
    <property type="match status" value="1"/>
</dbReference>
<dbReference type="PROSITE" id="PS00108">
    <property type="entry name" value="PROTEIN_KINASE_ST"/>
    <property type="match status" value="1"/>
</dbReference>
<gene>
    <name type="primary">CIPK12</name>
    <name type="synonym">PKS8</name>
    <name type="synonym">SnRK3.9</name>
    <name type="ordered locus">At4g18700</name>
    <name type="ORF">F28A21.110</name>
</gene>
<keyword id="KW-0067">ATP-binding</keyword>
<keyword id="KW-0418">Kinase</keyword>
<keyword id="KW-0464">Manganese</keyword>
<keyword id="KW-0547">Nucleotide-binding</keyword>
<keyword id="KW-0597">Phosphoprotein</keyword>
<keyword id="KW-1185">Reference proteome</keyword>
<keyword id="KW-0723">Serine/threonine-protein kinase</keyword>
<keyword id="KW-0808">Transferase</keyword>
<sequence length="489" mass="55017">MAEKITRETSLPKERSSPQALILGRYEMGKLLGHGTFAKVYLARNVKTNESVAIKVIDKEKVLKGGLIAHIKREISILRRVRHPNIVQLFEVMATKAKIYFVMEYVRGGELFNKVAKGRLKEEVARKYFQQLISAVTFCHARGVYHRDLKPENLLLDENGNLKVSDFGLSAVSDQIRQDGLFHTFCGTPAYVAPEVLARKGYDAAKVDIWSCGVILFVLMAGYLPFHDRNVMAMYKKIYRGEFRCPRWFSTELTRLLSKLLETNPEKRFTFPEIMENSWFKKGFKHIKFYVEDDKLCNVVDDDELESDSVESDRDSAASESEIEYLEPRRRVGGLPRPASLNAFDIISFSQGFDLSGLFDDDGEGSRFVSGAPVSKIISKLEEIAKVVSFTVRKKDCRVSLEGSRQGVKGPLTIAAEIFELTPSLVVVEVKKKGGDKTEYEDFCNNELKPKLQNLTADDVVAEPVAVSAVDETAIPNSPTISFLPSDTE</sequence>
<evidence type="ECO:0000250" key="1"/>
<evidence type="ECO:0000250" key="2">
    <source>
        <dbReference type="UniProtKB" id="Q38997"/>
    </source>
</evidence>
<evidence type="ECO:0000250" key="3">
    <source>
        <dbReference type="UniProtKB" id="Q93V58"/>
    </source>
</evidence>
<evidence type="ECO:0000255" key="4">
    <source>
        <dbReference type="PROSITE-ProRule" id="PRU00159"/>
    </source>
</evidence>
<evidence type="ECO:0000255" key="5">
    <source>
        <dbReference type="PROSITE-ProRule" id="PRU00256"/>
    </source>
</evidence>
<evidence type="ECO:0000255" key="6">
    <source>
        <dbReference type="PROSITE-ProRule" id="PRU10027"/>
    </source>
</evidence>
<evidence type="ECO:0000269" key="7">
    <source>
    </source>
</evidence>
<evidence type="ECO:0000269" key="8">
    <source>
    </source>
</evidence>
<evidence type="ECO:0000305" key="9"/>
<organism>
    <name type="scientific">Arabidopsis thaliana</name>
    <name type="common">Mouse-ear cress</name>
    <dbReference type="NCBI Taxonomy" id="3702"/>
    <lineage>
        <taxon>Eukaryota</taxon>
        <taxon>Viridiplantae</taxon>
        <taxon>Streptophyta</taxon>
        <taxon>Embryophyta</taxon>
        <taxon>Tracheophyta</taxon>
        <taxon>Spermatophyta</taxon>
        <taxon>Magnoliopsida</taxon>
        <taxon>eudicotyledons</taxon>
        <taxon>Gunneridae</taxon>
        <taxon>Pentapetalae</taxon>
        <taxon>rosids</taxon>
        <taxon>malvids</taxon>
        <taxon>Brassicales</taxon>
        <taxon>Brassicaceae</taxon>
        <taxon>Camelineae</taxon>
        <taxon>Arabidopsis</taxon>
    </lineage>
</organism>
<accession>Q9SN43</accession>